<proteinExistence type="inferred from homology"/>
<dbReference type="EC" id="2.1.1.-"/>
<dbReference type="EMBL" id="AE001437">
    <property type="protein sequence ID" value="AAK79403.1"/>
    <property type="molecule type" value="Genomic_DNA"/>
</dbReference>
<dbReference type="PIR" id="H97076">
    <property type="entry name" value="H97076"/>
</dbReference>
<dbReference type="RefSeq" id="NP_348063.1">
    <property type="nucleotide sequence ID" value="NC_003030.1"/>
</dbReference>
<dbReference type="SMR" id="Q97J51"/>
<dbReference type="STRING" id="272562.CA_C1435"/>
<dbReference type="KEGG" id="cac:CA_C1435"/>
<dbReference type="PATRIC" id="fig|272562.8.peg.1640"/>
<dbReference type="eggNOG" id="COG2265">
    <property type="taxonomic scope" value="Bacteria"/>
</dbReference>
<dbReference type="HOGENOM" id="CLU_014689_7_2_9"/>
<dbReference type="OrthoDB" id="9804590at2"/>
<dbReference type="Proteomes" id="UP000000814">
    <property type="component" value="Chromosome"/>
</dbReference>
<dbReference type="GO" id="GO:0051539">
    <property type="term" value="F:4 iron, 4 sulfur cluster binding"/>
    <property type="evidence" value="ECO:0007669"/>
    <property type="project" value="UniProtKB-KW"/>
</dbReference>
<dbReference type="GO" id="GO:0046872">
    <property type="term" value="F:metal ion binding"/>
    <property type="evidence" value="ECO:0007669"/>
    <property type="project" value="UniProtKB-KW"/>
</dbReference>
<dbReference type="GO" id="GO:0070041">
    <property type="term" value="F:rRNA (uridine-C5-)-methyltransferase activity"/>
    <property type="evidence" value="ECO:0007669"/>
    <property type="project" value="TreeGrafter"/>
</dbReference>
<dbReference type="GO" id="GO:0070475">
    <property type="term" value="P:rRNA base methylation"/>
    <property type="evidence" value="ECO:0007669"/>
    <property type="project" value="TreeGrafter"/>
</dbReference>
<dbReference type="CDD" id="cd02440">
    <property type="entry name" value="AdoMet_MTases"/>
    <property type="match status" value="1"/>
</dbReference>
<dbReference type="FunFam" id="3.40.50.150:FF:000009">
    <property type="entry name" value="23S rRNA (Uracil(1939)-C(5))-methyltransferase RlmD"/>
    <property type="match status" value="1"/>
</dbReference>
<dbReference type="Gene3D" id="2.40.50.1070">
    <property type="match status" value="1"/>
</dbReference>
<dbReference type="Gene3D" id="2.40.50.140">
    <property type="entry name" value="Nucleic acid-binding proteins"/>
    <property type="match status" value="1"/>
</dbReference>
<dbReference type="Gene3D" id="3.40.50.150">
    <property type="entry name" value="Vaccinia Virus protein VP39"/>
    <property type="match status" value="1"/>
</dbReference>
<dbReference type="InterPro" id="IPR030390">
    <property type="entry name" value="MeTrfase_TrmA_AS"/>
</dbReference>
<dbReference type="InterPro" id="IPR012340">
    <property type="entry name" value="NA-bd_OB-fold"/>
</dbReference>
<dbReference type="InterPro" id="IPR029063">
    <property type="entry name" value="SAM-dependent_MTases_sf"/>
</dbReference>
<dbReference type="InterPro" id="IPR002792">
    <property type="entry name" value="TRAM_dom"/>
</dbReference>
<dbReference type="InterPro" id="IPR010280">
    <property type="entry name" value="U5_MeTrfase_fam"/>
</dbReference>
<dbReference type="NCBIfam" id="TIGR00479">
    <property type="entry name" value="rumA"/>
    <property type="match status" value="1"/>
</dbReference>
<dbReference type="PANTHER" id="PTHR11061">
    <property type="entry name" value="RNA M5U METHYLTRANSFERASE"/>
    <property type="match status" value="1"/>
</dbReference>
<dbReference type="PANTHER" id="PTHR11061:SF30">
    <property type="entry name" value="TRNA (URACIL(54)-C(5))-METHYLTRANSFERASE"/>
    <property type="match status" value="1"/>
</dbReference>
<dbReference type="Pfam" id="PF05958">
    <property type="entry name" value="tRNA_U5-meth_tr"/>
    <property type="match status" value="1"/>
</dbReference>
<dbReference type="SUPFAM" id="SSF50249">
    <property type="entry name" value="Nucleic acid-binding proteins"/>
    <property type="match status" value="1"/>
</dbReference>
<dbReference type="SUPFAM" id="SSF53335">
    <property type="entry name" value="S-adenosyl-L-methionine-dependent methyltransferases"/>
    <property type="match status" value="1"/>
</dbReference>
<dbReference type="PROSITE" id="PS51687">
    <property type="entry name" value="SAM_MT_RNA_M5U"/>
    <property type="match status" value="1"/>
</dbReference>
<dbReference type="PROSITE" id="PS50926">
    <property type="entry name" value="TRAM"/>
    <property type="match status" value="1"/>
</dbReference>
<dbReference type="PROSITE" id="PS01230">
    <property type="entry name" value="TRMA_1"/>
    <property type="match status" value="1"/>
</dbReference>
<name>Y1435_CLOAB</name>
<gene>
    <name type="ordered locus">CA_C1435</name>
</gene>
<keyword id="KW-0004">4Fe-4S</keyword>
<keyword id="KW-0408">Iron</keyword>
<keyword id="KW-0411">Iron-sulfur</keyword>
<keyword id="KW-0479">Metal-binding</keyword>
<keyword id="KW-0489">Methyltransferase</keyword>
<keyword id="KW-1185">Reference proteome</keyword>
<keyword id="KW-0949">S-adenosyl-L-methionine</keyword>
<keyword id="KW-0808">Transferase</keyword>
<protein>
    <recommendedName>
        <fullName>Uncharacterized RNA methyltransferase CA_C1435</fullName>
        <ecNumber>2.1.1.-</ecNumber>
    </recommendedName>
</protein>
<sequence length="456" mass="51312">MKLMRKNETREFLIEDIEFPAVGVAFYNDKKVYIKGAVPGQKVLARVSKVRREKIEAKLKEIVTNIPGAAQPKCPDFGVCGGCVHQFLPYEKQLEFKEREVLKLFKDAKIEGFEYLGILGSPEKEEYRNKMEYTFGDFVKGGELTLGMHAKNSGFSIVNTDKCNIVDEDFRIILKTVVEYFRKKDLPIYKVMQHVGYLRNLVVRKAKNTGEILIALVTTSQVDFDLTELTEILKSINYLGELKGILHVINDGLADMVRGDKIVTLFGQDYITERILDLKFKISLFSFFQTNSKGAEKLYSEVLEFLGDVSNKTVFDLYCGTGTIGQLASKKAEKVIGIELIEEAVEAAKENTKLNNISNCSFIAGDVAKVITEIKEKPDTIILDPPRPGVSPNAMKYVIKFNAPEIVYVSCNPKTLVNDLGVLRAYGYEVEKVKIVDMFPGTGHVETVVLLQRKII</sequence>
<comment type="similarity">
    <text evidence="3">Belongs to the class I-like SAM-binding methyltransferase superfamily. RNA M5U methyltransferase family.</text>
</comment>
<evidence type="ECO:0000250" key="1"/>
<evidence type="ECO:0000255" key="2">
    <source>
        <dbReference type="PROSITE-ProRule" id="PRU00208"/>
    </source>
</evidence>
<evidence type="ECO:0000255" key="3">
    <source>
        <dbReference type="PROSITE-ProRule" id="PRU01024"/>
    </source>
</evidence>
<feature type="chain" id="PRO_0000161969" description="Uncharacterized RNA methyltransferase CA_C1435">
    <location>
        <begin position="1"/>
        <end position="456"/>
    </location>
</feature>
<feature type="domain" description="TRAM" evidence="2">
    <location>
        <begin position="3"/>
        <end position="61"/>
    </location>
</feature>
<feature type="active site" description="Nucleophile" evidence="3">
    <location>
        <position position="411"/>
    </location>
</feature>
<feature type="binding site" evidence="1">
    <location>
        <position position="74"/>
    </location>
    <ligand>
        <name>[4Fe-4S] cluster</name>
        <dbReference type="ChEBI" id="CHEBI:49883"/>
    </ligand>
</feature>
<feature type="binding site" evidence="1">
    <location>
        <position position="80"/>
    </location>
    <ligand>
        <name>[4Fe-4S] cluster</name>
        <dbReference type="ChEBI" id="CHEBI:49883"/>
    </ligand>
</feature>
<feature type="binding site" evidence="1">
    <location>
        <position position="83"/>
    </location>
    <ligand>
        <name>[4Fe-4S] cluster</name>
        <dbReference type="ChEBI" id="CHEBI:49883"/>
    </ligand>
</feature>
<feature type="binding site" evidence="1">
    <location>
        <position position="163"/>
    </location>
    <ligand>
        <name>[4Fe-4S] cluster</name>
        <dbReference type="ChEBI" id="CHEBI:49883"/>
    </ligand>
</feature>
<feature type="binding site" evidence="3">
    <location>
        <position position="289"/>
    </location>
    <ligand>
        <name>S-adenosyl-L-methionine</name>
        <dbReference type="ChEBI" id="CHEBI:59789"/>
    </ligand>
</feature>
<feature type="binding site" evidence="3">
    <location>
        <position position="318"/>
    </location>
    <ligand>
        <name>S-adenosyl-L-methionine</name>
        <dbReference type="ChEBI" id="CHEBI:59789"/>
    </ligand>
</feature>
<feature type="binding site" evidence="3">
    <location>
        <position position="339"/>
    </location>
    <ligand>
        <name>S-adenosyl-L-methionine</name>
        <dbReference type="ChEBI" id="CHEBI:59789"/>
    </ligand>
</feature>
<feature type="binding site" evidence="3">
    <location>
        <position position="384"/>
    </location>
    <ligand>
        <name>S-adenosyl-L-methionine</name>
        <dbReference type="ChEBI" id="CHEBI:59789"/>
    </ligand>
</feature>
<reference key="1">
    <citation type="journal article" date="2001" name="J. Bacteriol.">
        <title>Genome sequence and comparative analysis of the solvent-producing bacterium Clostridium acetobutylicum.</title>
        <authorList>
            <person name="Noelling J."/>
            <person name="Breton G."/>
            <person name="Omelchenko M.V."/>
            <person name="Makarova K.S."/>
            <person name="Zeng Q."/>
            <person name="Gibson R."/>
            <person name="Lee H.M."/>
            <person name="Dubois J."/>
            <person name="Qiu D."/>
            <person name="Hitti J."/>
            <person name="Wolf Y.I."/>
            <person name="Tatusov R.L."/>
            <person name="Sabathe F."/>
            <person name="Doucette-Stamm L.A."/>
            <person name="Soucaille P."/>
            <person name="Daly M.J."/>
            <person name="Bennett G.N."/>
            <person name="Koonin E.V."/>
            <person name="Smith D.R."/>
        </authorList>
    </citation>
    <scope>NUCLEOTIDE SEQUENCE [LARGE SCALE GENOMIC DNA]</scope>
    <source>
        <strain>ATCC 824 / DSM 792 / JCM 1419 / IAM 19013 / LMG 5710 / NBRC 13948 / NRRL B-527 / VKM B-1787 / 2291 / W</strain>
    </source>
</reference>
<accession>Q97J51</accession>
<organism>
    <name type="scientific">Clostridium acetobutylicum (strain ATCC 824 / DSM 792 / JCM 1419 / IAM 19013 / LMG 5710 / NBRC 13948 / NRRL B-527 / VKM B-1787 / 2291 / W)</name>
    <dbReference type="NCBI Taxonomy" id="272562"/>
    <lineage>
        <taxon>Bacteria</taxon>
        <taxon>Bacillati</taxon>
        <taxon>Bacillota</taxon>
        <taxon>Clostridia</taxon>
        <taxon>Eubacteriales</taxon>
        <taxon>Clostridiaceae</taxon>
        <taxon>Clostridium</taxon>
    </lineage>
</organism>